<reference key="1">
    <citation type="journal article" date="1996" name="Biochem. Biophys. Res. Commun.">
        <title>A family of novel DNA-binding nuclear proteins having polypyrimidine tract-binding motif and arginine/serine-rich motif.</title>
        <authorList>
            <person name="Matsushima Y."/>
            <person name="Ohshima M."/>
            <person name="Sonoda M."/>
            <person name="Kitagawa Y."/>
        </authorList>
    </citation>
    <scope>NUCLEOTIDE SEQUENCE [MRNA] (ISOFORMS 4; 5 AND 6)</scope>
    <source>
        <tissue>Heart</tissue>
    </source>
</reference>
<reference key="2">
    <citation type="journal article" date="2005" name="Science">
        <title>The transcriptional landscape of the mammalian genome.</title>
        <authorList>
            <person name="Carninci P."/>
            <person name="Kasukawa T."/>
            <person name="Katayama S."/>
            <person name="Gough J."/>
            <person name="Frith M.C."/>
            <person name="Maeda N."/>
            <person name="Oyama R."/>
            <person name="Ravasi T."/>
            <person name="Lenhard B."/>
            <person name="Wells C."/>
            <person name="Kodzius R."/>
            <person name="Shimokawa K."/>
            <person name="Bajic V.B."/>
            <person name="Brenner S.E."/>
            <person name="Batalov S."/>
            <person name="Forrest A.R."/>
            <person name="Zavolan M."/>
            <person name="Davis M.J."/>
            <person name="Wilming L.G."/>
            <person name="Aidinis V."/>
            <person name="Allen J.E."/>
            <person name="Ambesi-Impiombato A."/>
            <person name="Apweiler R."/>
            <person name="Aturaliya R.N."/>
            <person name="Bailey T.L."/>
            <person name="Bansal M."/>
            <person name="Baxter L."/>
            <person name="Beisel K.W."/>
            <person name="Bersano T."/>
            <person name="Bono H."/>
            <person name="Chalk A.M."/>
            <person name="Chiu K.P."/>
            <person name="Choudhary V."/>
            <person name="Christoffels A."/>
            <person name="Clutterbuck D.R."/>
            <person name="Crowe M.L."/>
            <person name="Dalla E."/>
            <person name="Dalrymple B.P."/>
            <person name="de Bono B."/>
            <person name="Della Gatta G."/>
            <person name="di Bernardo D."/>
            <person name="Down T."/>
            <person name="Engstrom P."/>
            <person name="Fagiolini M."/>
            <person name="Faulkner G."/>
            <person name="Fletcher C.F."/>
            <person name="Fukushima T."/>
            <person name="Furuno M."/>
            <person name="Futaki S."/>
            <person name="Gariboldi M."/>
            <person name="Georgii-Hemming P."/>
            <person name="Gingeras T.R."/>
            <person name="Gojobori T."/>
            <person name="Green R.E."/>
            <person name="Gustincich S."/>
            <person name="Harbers M."/>
            <person name="Hayashi Y."/>
            <person name="Hensch T.K."/>
            <person name="Hirokawa N."/>
            <person name="Hill D."/>
            <person name="Huminiecki L."/>
            <person name="Iacono M."/>
            <person name="Ikeo K."/>
            <person name="Iwama A."/>
            <person name="Ishikawa T."/>
            <person name="Jakt M."/>
            <person name="Kanapin A."/>
            <person name="Katoh M."/>
            <person name="Kawasawa Y."/>
            <person name="Kelso J."/>
            <person name="Kitamura H."/>
            <person name="Kitano H."/>
            <person name="Kollias G."/>
            <person name="Krishnan S.P."/>
            <person name="Kruger A."/>
            <person name="Kummerfeld S.K."/>
            <person name="Kurochkin I.V."/>
            <person name="Lareau L.F."/>
            <person name="Lazarevic D."/>
            <person name="Lipovich L."/>
            <person name="Liu J."/>
            <person name="Liuni S."/>
            <person name="McWilliam S."/>
            <person name="Madan Babu M."/>
            <person name="Madera M."/>
            <person name="Marchionni L."/>
            <person name="Matsuda H."/>
            <person name="Matsuzawa S."/>
            <person name="Miki H."/>
            <person name="Mignone F."/>
            <person name="Miyake S."/>
            <person name="Morris K."/>
            <person name="Mottagui-Tabar S."/>
            <person name="Mulder N."/>
            <person name="Nakano N."/>
            <person name="Nakauchi H."/>
            <person name="Ng P."/>
            <person name="Nilsson R."/>
            <person name="Nishiguchi S."/>
            <person name="Nishikawa S."/>
            <person name="Nori F."/>
            <person name="Ohara O."/>
            <person name="Okazaki Y."/>
            <person name="Orlando V."/>
            <person name="Pang K.C."/>
            <person name="Pavan W.J."/>
            <person name="Pavesi G."/>
            <person name="Pesole G."/>
            <person name="Petrovsky N."/>
            <person name="Piazza S."/>
            <person name="Reed J."/>
            <person name="Reid J.F."/>
            <person name="Ring B.Z."/>
            <person name="Ringwald M."/>
            <person name="Rost B."/>
            <person name="Ruan Y."/>
            <person name="Salzberg S.L."/>
            <person name="Sandelin A."/>
            <person name="Schneider C."/>
            <person name="Schoenbach C."/>
            <person name="Sekiguchi K."/>
            <person name="Semple C.A."/>
            <person name="Seno S."/>
            <person name="Sessa L."/>
            <person name="Sheng Y."/>
            <person name="Shibata Y."/>
            <person name="Shimada H."/>
            <person name="Shimada K."/>
            <person name="Silva D."/>
            <person name="Sinclair B."/>
            <person name="Sperling S."/>
            <person name="Stupka E."/>
            <person name="Sugiura K."/>
            <person name="Sultana R."/>
            <person name="Takenaka Y."/>
            <person name="Taki K."/>
            <person name="Tammoja K."/>
            <person name="Tan S.L."/>
            <person name="Tang S."/>
            <person name="Taylor M.S."/>
            <person name="Tegner J."/>
            <person name="Teichmann S.A."/>
            <person name="Ueda H.R."/>
            <person name="van Nimwegen E."/>
            <person name="Verardo R."/>
            <person name="Wei C.L."/>
            <person name="Yagi K."/>
            <person name="Yamanishi H."/>
            <person name="Zabarovsky E."/>
            <person name="Zhu S."/>
            <person name="Zimmer A."/>
            <person name="Hide W."/>
            <person name="Bult C."/>
            <person name="Grimmond S.M."/>
            <person name="Teasdale R.D."/>
            <person name="Liu E.T."/>
            <person name="Brusic V."/>
            <person name="Quackenbush J."/>
            <person name="Wahlestedt C."/>
            <person name="Mattick J.S."/>
            <person name="Hume D.A."/>
            <person name="Kai C."/>
            <person name="Sasaki D."/>
            <person name="Tomaru Y."/>
            <person name="Fukuda S."/>
            <person name="Kanamori-Katayama M."/>
            <person name="Suzuki M."/>
            <person name="Aoki J."/>
            <person name="Arakawa T."/>
            <person name="Iida J."/>
            <person name="Imamura K."/>
            <person name="Itoh M."/>
            <person name="Kato T."/>
            <person name="Kawaji H."/>
            <person name="Kawagashira N."/>
            <person name="Kawashima T."/>
            <person name="Kojima M."/>
            <person name="Kondo S."/>
            <person name="Konno H."/>
            <person name="Nakano K."/>
            <person name="Ninomiya N."/>
            <person name="Nishio T."/>
            <person name="Okada M."/>
            <person name="Plessy C."/>
            <person name="Shibata K."/>
            <person name="Shiraki T."/>
            <person name="Suzuki S."/>
            <person name="Tagami M."/>
            <person name="Waki K."/>
            <person name="Watahiki A."/>
            <person name="Okamura-Oho Y."/>
            <person name="Suzuki H."/>
            <person name="Kawai J."/>
            <person name="Hayashizaki Y."/>
        </authorList>
    </citation>
    <scope>NUCLEOTIDE SEQUENCE [LARGE SCALE MRNA] (ISOFORM 3)</scope>
    <source>
        <strain>C57BL/6J</strain>
        <tissue>Cerebellum</tissue>
    </source>
</reference>
<reference key="3">
    <citation type="journal article" date="2004" name="Genome Res.">
        <title>The status, quality, and expansion of the NIH full-length cDNA project: the Mammalian Gene Collection (MGC).</title>
        <authorList>
            <consortium name="The MGC Project Team"/>
        </authorList>
    </citation>
    <scope>NUCLEOTIDE SEQUENCE [LARGE SCALE MRNA] (ISOFORM 2)</scope>
    <source>
        <strain>C57BL/6J</strain>
        <tissue>Head</tissue>
    </source>
</reference>
<reference key="4">
    <citation type="submission" date="2007-04" db="UniProtKB">
        <authorList>
            <person name="Lubec G."/>
            <person name="Kang S.U."/>
        </authorList>
    </citation>
    <scope>PROTEIN SEQUENCE OF 761-768; 873-891; 1395-1404; 1506-1513 AND 1874-1881</scope>
    <scope>IDENTIFICATION BY MASS SPECTROMETRY</scope>
    <source>
        <strain>C57BL/6J</strain>
        <tissue>Brain</tissue>
    </source>
</reference>
<reference key="5">
    <citation type="journal article" date="2010" name="Cell">
        <title>A tissue-specific atlas of mouse protein phosphorylation and expression.</title>
        <authorList>
            <person name="Huttlin E.L."/>
            <person name="Jedrychowski M.P."/>
            <person name="Elias J.E."/>
            <person name="Goswami T."/>
            <person name="Rad R."/>
            <person name="Beausoleil S.A."/>
            <person name="Villen J."/>
            <person name="Haas W."/>
            <person name="Sowa M.E."/>
            <person name="Gygi S.P."/>
        </authorList>
    </citation>
    <scope>PHOSPHORYLATION [LARGE SCALE ANALYSIS] AT SER-128 AND SER-1635</scope>
    <scope>IDENTIFICATION BY MASS SPECTROMETRY [LARGE SCALE ANALYSIS]</scope>
    <source>
        <tissue>Spleen</tissue>
        <tissue>Testis</tissue>
    </source>
</reference>
<reference key="6">
    <citation type="journal article" date="2011" name="J. Biol. Chem.">
        <title>Regulation of adipocyte differentiation by the zinc finger protein ZNF638.</title>
        <authorList>
            <person name="Meruvu S."/>
            <person name="Hugendubler L."/>
            <person name="Mueller E."/>
        </authorList>
    </citation>
    <scope>FUNCTION</scope>
    <scope>INTERACTION WITH CEBPA; CEBPD AND CEBPG</scope>
    <scope>SUBCELLULAR LOCATION</scope>
    <scope>DEVELOPMENTAL STAGE</scope>
</reference>
<reference key="7">
    <citation type="journal article" date="2014" name="J. Lipid Res.">
        <title>The adipogenic transcriptional cofactor ZNF638 interacts with splicing regulators and influences alternative splicing.</title>
        <authorList>
            <person name="Du C."/>
            <person name="Ma X."/>
            <person name="Meruvu S."/>
            <person name="Hugendubler L."/>
            <person name="Mueller E."/>
        </authorList>
    </citation>
    <scope>FUNCTION</scope>
    <scope>SUBCELLULAR LOCATION</scope>
    <scope>DOMAIN</scope>
</reference>
<reference key="8">
    <citation type="journal article" date="2018" name="Nature">
        <title>NP220 mediates silencing of unintegrated retroviral DNA.</title>
        <authorList>
            <person name="Zhu Y."/>
            <person name="Wang G.Z."/>
            <person name="Cingoez O."/>
            <person name="Goff S.P."/>
        </authorList>
    </citation>
    <scope>FUNCTION</scope>
</reference>
<organism>
    <name type="scientific">Mus musculus</name>
    <name type="common">Mouse</name>
    <dbReference type="NCBI Taxonomy" id="10090"/>
    <lineage>
        <taxon>Eukaryota</taxon>
        <taxon>Metazoa</taxon>
        <taxon>Chordata</taxon>
        <taxon>Craniata</taxon>
        <taxon>Vertebrata</taxon>
        <taxon>Euteleostomi</taxon>
        <taxon>Mammalia</taxon>
        <taxon>Eutheria</taxon>
        <taxon>Euarchontoglires</taxon>
        <taxon>Glires</taxon>
        <taxon>Rodentia</taxon>
        <taxon>Myomorpha</taxon>
        <taxon>Muroidea</taxon>
        <taxon>Muridae</taxon>
        <taxon>Murinae</taxon>
        <taxon>Mus</taxon>
        <taxon>Mus</taxon>
    </lineage>
</organism>
<name>ZN638_MOUSE</name>
<protein>
    <recommendedName>
        <fullName evidence="10">Zinc finger protein 638</fullName>
    </recommendedName>
    <alternativeName>
        <fullName evidence="11">Nuclear protein 220</fullName>
    </alternativeName>
    <alternativeName>
        <fullName evidence="1">Zinc finger matrin-like protein</fullName>
    </alternativeName>
</protein>
<keyword id="KW-0010">Activator</keyword>
<keyword id="KW-0025">Alternative splicing</keyword>
<keyword id="KW-0903">Direct protein sequencing</keyword>
<keyword id="KW-0238">DNA-binding</keyword>
<keyword id="KW-1017">Isopeptide bond</keyword>
<keyword id="KW-0479">Metal-binding</keyword>
<keyword id="KW-0488">Methylation</keyword>
<keyword id="KW-0539">Nucleus</keyword>
<keyword id="KW-0597">Phosphoprotein</keyword>
<keyword id="KW-1185">Reference proteome</keyword>
<keyword id="KW-0677">Repeat</keyword>
<keyword id="KW-0678">Repressor</keyword>
<keyword id="KW-0804">Transcription</keyword>
<keyword id="KW-0805">Transcription regulation</keyword>
<keyword id="KW-0832">Ubl conjugation</keyword>
<keyword id="KW-0862">Zinc</keyword>
<keyword id="KW-0863">Zinc-finger</keyword>
<comment type="function">
    <text evidence="1 5 6 7">Transcription factor that binds to cytidine clusters in double-stranded DNA (By similarity). Plays a key role in the silencing of unintegrated retroviral DNA: some part of the retroviral DNA formed immediately after infection remains unintegrated in the host genome and is transcriptionally repressed (PubMed:30487602). Mediates transcriptional repression of unintegrated viral DNA by specifically binding to the cytidine clusters of retroviral DNA and mediating the recruitment of chromatin silencers, such as the HUSH complex, SETDB1 and the histone deacetylases HDAC1 and HDAC4 (PubMed:30487602). Acts as an early regulator of adipogenesis by acting as a transcription cofactor of CEBPs (CEBPA, CEBPD and/or CEBPG), controlling the expression of PPARG and probably of other proadipogenic genes, such as SREBF1 (PubMed:21602272). May also regulate alternative splicing of target genes during adipogenesis (PubMed:25024404).</text>
</comment>
<comment type="subunit">
    <text evidence="1 5">Interacts with FHL2 (By similarity). Interacts with CEBPA, CEBPD and CEBPG (PubMed:21602272). Interacts with MPHOSPH8 and TASOR components of the HUSH complex; leading to recruitment of the HUSH complex (By similarity). Interacts with SETDB1 (By similarity). Interacts with HDAC1 (By similarity). Interacts with HDAC4 (By similarity).</text>
</comment>
<comment type="subcellular location">
    <subcellularLocation>
        <location evidence="2 5 6">Nucleus speckle</location>
    </subcellularLocation>
</comment>
<comment type="alternative products">
    <event type="alternative splicing"/>
    <isoform>
        <id>Q61464-1</id>
        <name>1</name>
        <name evidence="11">Alpha</name>
        <sequence type="displayed"/>
    </isoform>
    <isoform>
        <id>Q61464-2</id>
        <name>2</name>
        <sequence type="described" ref="VSP_014809 VSP_014812 VSP_014813 VSP_014814"/>
    </isoform>
    <isoform>
        <id>Q61464-3</id>
        <name>3</name>
        <sequence type="described" ref="VSP_014807 VSP_014808"/>
    </isoform>
    <isoform>
        <id>Q61464-4</id>
        <name>4</name>
        <name evidence="11">Beta</name>
        <sequence type="described" ref="VSP_014814"/>
    </isoform>
    <isoform>
        <id>Q61464-5</id>
        <name>5</name>
        <name evidence="11">Gamma</name>
        <sequence type="described" ref="VSP_014811"/>
    </isoform>
    <isoform>
        <id>Q61464-7</id>
        <name>6</name>
        <name evidence="11">Delta</name>
        <sequence type="described" ref="VSP_014810"/>
    </isoform>
</comment>
<comment type="developmental stage">
    <text evidence="5">In an vitro adipocyte differentiation system, induced at the protein and RNA levels shortly after exposure to the induction mixture. Levels peak before PPARG induction and rapidly decrease during later stages of differentiation.</text>
</comment>
<comment type="domain">
    <text evidence="6">The matrin-type zinc finger domain is required for localization to nuclear speckles.</text>
</comment>
<comment type="miscellaneous">
    <molecule>Isoform 3</molecule>
    <text evidence="12">Due to intron retention.</text>
</comment>
<accession>Q61464</accession>
<accession>Q6DFV9</accession>
<accession>Q8C941</accession>
<feature type="chain" id="PRO_0000082012" description="Zinc finger protein 638">
    <location>
        <begin position="1"/>
        <end position="1960"/>
    </location>
</feature>
<feature type="domain" description="RRM 1" evidence="3">
    <location>
        <begin position="676"/>
        <end position="751"/>
    </location>
</feature>
<feature type="domain" description="RRM 2" evidence="3">
    <location>
        <begin position="902"/>
        <end position="976"/>
    </location>
</feature>
<feature type="zinc finger region" description="Matrin-type" evidence="2">
    <location>
        <begin position="1876"/>
        <end position="1906"/>
    </location>
</feature>
<feature type="region of interest" description="Disordered" evidence="4">
    <location>
        <begin position="1"/>
        <end position="137"/>
    </location>
</feature>
<feature type="region of interest" description="Disordered" evidence="4">
    <location>
        <begin position="352"/>
        <end position="373"/>
    </location>
</feature>
<feature type="region of interest" description="Disordered" evidence="4">
    <location>
        <begin position="463"/>
        <end position="673"/>
    </location>
</feature>
<feature type="region of interest" description="Involved in localization to nuclear speckles" evidence="6">
    <location>
        <begin position="470"/>
        <end position="573"/>
    </location>
</feature>
<feature type="region of interest" description="Disordered" evidence="4">
    <location>
        <begin position="749"/>
        <end position="804"/>
    </location>
</feature>
<feature type="region of interest" description="Disordered" evidence="4">
    <location>
        <begin position="827"/>
        <end position="899"/>
    </location>
</feature>
<feature type="region of interest" description="Disordered" evidence="4">
    <location>
        <begin position="1082"/>
        <end position="1151"/>
    </location>
</feature>
<feature type="region of interest" description="Disordered" evidence="4">
    <location>
        <begin position="1396"/>
        <end position="1420"/>
    </location>
</feature>
<feature type="region of interest" description="Disordered" evidence="4">
    <location>
        <begin position="1442"/>
        <end position="1462"/>
    </location>
</feature>
<feature type="region of interest" description="Disordered" evidence="4">
    <location>
        <begin position="1484"/>
        <end position="1527"/>
    </location>
</feature>
<feature type="region of interest" description="Disordered" evidence="4">
    <location>
        <begin position="1550"/>
        <end position="1583"/>
    </location>
</feature>
<feature type="region of interest" description="Disordered" evidence="4">
    <location>
        <begin position="1763"/>
        <end position="1898"/>
    </location>
</feature>
<feature type="region of interest" description="Disordered" evidence="4">
    <location>
        <begin position="1930"/>
        <end position="1960"/>
    </location>
</feature>
<feature type="compositionally biased region" description="Pro residues" evidence="4">
    <location>
        <begin position="19"/>
        <end position="31"/>
    </location>
</feature>
<feature type="compositionally biased region" description="Polar residues" evidence="4">
    <location>
        <begin position="60"/>
        <end position="75"/>
    </location>
</feature>
<feature type="compositionally biased region" description="Basic and acidic residues" evidence="4">
    <location>
        <begin position="76"/>
        <end position="89"/>
    </location>
</feature>
<feature type="compositionally biased region" description="Polar residues" evidence="4">
    <location>
        <begin position="117"/>
        <end position="137"/>
    </location>
</feature>
<feature type="compositionally biased region" description="Basic and acidic residues" evidence="4">
    <location>
        <begin position="468"/>
        <end position="483"/>
    </location>
</feature>
<feature type="compositionally biased region" description="Basic residues" evidence="4">
    <location>
        <begin position="484"/>
        <end position="556"/>
    </location>
</feature>
<feature type="compositionally biased region" description="Basic and acidic residues" evidence="4">
    <location>
        <begin position="565"/>
        <end position="583"/>
    </location>
</feature>
<feature type="compositionally biased region" description="Basic and acidic residues" evidence="4">
    <location>
        <begin position="591"/>
        <end position="602"/>
    </location>
</feature>
<feature type="compositionally biased region" description="Low complexity" evidence="4">
    <location>
        <begin position="618"/>
        <end position="628"/>
    </location>
</feature>
<feature type="compositionally biased region" description="Basic and acidic residues" evidence="4">
    <location>
        <begin position="755"/>
        <end position="782"/>
    </location>
</feature>
<feature type="compositionally biased region" description="Low complexity" evidence="4">
    <location>
        <begin position="783"/>
        <end position="802"/>
    </location>
</feature>
<feature type="compositionally biased region" description="Basic and acidic residues" evidence="4">
    <location>
        <begin position="838"/>
        <end position="854"/>
    </location>
</feature>
<feature type="compositionally biased region" description="Basic and acidic residues" evidence="4">
    <location>
        <begin position="867"/>
        <end position="879"/>
    </location>
</feature>
<feature type="compositionally biased region" description="Basic and acidic residues" evidence="4">
    <location>
        <begin position="888"/>
        <end position="899"/>
    </location>
</feature>
<feature type="compositionally biased region" description="Basic and acidic residues" evidence="4">
    <location>
        <begin position="1082"/>
        <end position="1092"/>
    </location>
</feature>
<feature type="compositionally biased region" description="Basic and acidic residues" evidence="4">
    <location>
        <begin position="1140"/>
        <end position="1151"/>
    </location>
</feature>
<feature type="compositionally biased region" description="Low complexity" evidence="4">
    <location>
        <begin position="1399"/>
        <end position="1409"/>
    </location>
</feature>
<feature type="compositionally biased region" description="Polar residues" evidence="4">
    <location>
        <begin position="1442"/>
        <end position="1459"/>
    </location>
</feature>
<feature type="compositionally biased region" description="Basic and acidic residues" evidence="4">
    <location>
        <begin position="1484"/>
        <end position="1503"/>
    </location>
</feature>
<feature type="compositionally biased region" description="Basic and acidic residues" evidence="4">
    <location>
        <begin position="1518"/>
        <end position="1527"/>
    </location>
</feature>
<feature type="compositionally biased region" description="Basic and acidic residues" evidence="4">
    <location>
        <begin position="1772"/>
        <end position="1790"/>
    </location>
</feature>
<feature type="compositionally biased region" description="Polar residues" evidence="4">
    <location>
        <begin position="1806"/>
        <end position="1818"/>
    </location>
</feature>
<feature type="compositionally biased region" description="Basic and acidic residues" evidence="4">
    <location>
        <begin position="1819"/>
        <end position="1831"/>
    </location>
</feature>
<feature type="compositionally biased region" description="Basic and acidic residues" evidence="4">
    <location>
        <begin position="1870"/>
        <end position="1885"/>
    </location>
</feature>
<feature type="compositionally biased region" description="Polar residues" evidence="4">
    <location>
        <begin position="1886"/>
        <end position="1895"/>
    </location>
</feature>
<feature type="compositionally biased region" description="Basic and acidic residues" evidence="4">
    <location>
        <begin position="1936"/>
        <end position="1960"/>
    </location>
</feature>
<feature type="modified residue" description="Asymmetric dimethylarginine" evidence="1">
    <location>
        <position position="47"/>
    </location>
</feature>
<feature type="modified residue" description="Asymmetric dimethylarginine" evidence="1">
    <location>
        <position position="49"/>
    </location>
</feature>
<feature type="modified residue" description="Asymmetric dimethylarginine" evidence="1">
    <location>
        <position position="54"/>
    </location>
</feature>
<feature type="modified residue" description="Phosphoserine" evidence="14">
    <location>
        <position position="128"/>
    </location>
</feature>
<feature type="modified residue" description="Phosphoserine" evidence="1">
    <location>
        <position position="288"/>
    </location>
</feature>
<feature type="modified residue" description="Phosphoserine" evidence="1">
    <location>
        <position position="298"/>
    </location>
</feature>
<feature type="modified residue" description="Phosphoserine" evidence="1">
    <location>
        <position position="367"/>
    </location>
</feature>
<feature type="modified residue" description="Phosphoserine" evidence="1">
    <location>
        <position position="381"/>
    </location>
</feature>
<feature type="modified residue" description="Phosphoserine" evidence="1">
    <location>
        <position position="418"/>
    </location>
</feature>
<feature type="modified residue" description="Phosphoserine" evidence="1">
    <location>
        <position position="554"/>
    </location>
</feature>
<feature type="modified residue" description="Phosphoserine" evidence="1">
    <location>
        <position position="606"/>
    </location>
</feature>
<feature type="modified residue" description="Phosphoserine" evidence="1">
    <location>
        <position position="615"/>
    </location>
</feature>
<feature type="modified residue" description="Phosphoserine" evidence="1">
    <location>
        <position position="637"/>
    </location>
</feature>
<feature type="modified residue" description="Phosphoserine" evidence="1">
    <location>
        <position position="1099"/>
    </location>
</feature>
<feature type="modified residue" description="Phosphoserine" evidence="1">
    <location>
        <position position="1400"/>
    </location>
</feature>
<feature type="modified residue" description="Phosphoserine" evidence="14">
    <location>
        <position position="1635"/>
    </location>
</feature>
<feature type="modified residue" description="Phosphoserine" evidence="1">
    <location>
        <position position="1661"/>
    </location>
</feature>
<feature type="modified residue" description="Phosphoserine" evidence="1">
    <location>
        <position position="1864"/>
    </location>
</feature>
<feature type="cross-link" description="Glycyl lysine isopeptide (Lys-Gly) (interchain with G-Cter in SUMO2)" evidence="1">
    <location>
        <position position="291"/>
    </location>
</feature>
<feature type="cross-link" description="Glycyl lysine isopeptide (Lys-Gly) (interchain with G-Cter in SUMO2)" evidence="1">
    <location>
        <position position="775"/>
    </location>
</feature>
<feature type="cross-link" description="Glycyl lysine isopeptide (Lys-Gly) (interchain with G-Cter in SUMO2)" evidence="1">
    <location>
        <position position="1804"/>
    </location>
</feature>
<feature type="splice variant" id="VSP_014807" description="In isoform 3." evidence="9">
    <original>DWIQHQNTSTHIESCRQ</original>
    <variation>VSVFKRLLYNDAQCPGF</variation>
    <location>
        <begin position="438"/>
        <end position="454"/>
    </location>
</feature>
<feature type="splice variant" id="VSP_014808" description="In isoform 3." evidence="9">
    <location>
        <begin position="456"/>
        <end position="1960"/>
    </location>
</feature>
<feature type="splice variant" id="VSP_014809" description="In isoform 2." evidence="8">
    <location>
        <begin position="810"/>
        <end position="832"/>
    </location>
</feature>
<feature type="splice variant" id="VSP_014810" description="In isoform 6." evidence="11">
    <location>
        <begin position="1147"/>
        <end position="1866"/>
    </location>
</feature>
<feature type="splice variant" id="VSP_014811" description="In isoform 5." evidence="11">
    <location>
        <begin position="1147"/>
        <end position="1832"/>
    </location>
</feature>
<feature type="splice variant" id="VSP_014812" description="In isoform 2." evidence="8">
    <original>KEEPKQALCESDFAIQTLELEAQGAEVSIEIPLVASTPANIELFSENIDESALN</original>
    <variation>PGSETVTQKDLKTMPERHLAAKTPMKRVRIGKSSPSQKVAEPTKGEEAFQMSEG</variation>
    <location>
        <begin position="1147"/>
        <end position="1200"/>
    </location>
</feature>
<feature type="splice variant" id="VSP_014813" description="In isoform 2." evidence="8">
    <location>
        <begin position="1201"/>
        <end position="1832"/>
    </location>
</feature>
<feature type="splice variant" id="VSP_014814" description="In isoform 2 and isoform 4." evidence="8 11">
    <location>
        <begin position="1833"/>
        <end position="1866"/>
    </location>
</feature>
<feature type="sequence conflict" description="In Ref. 3; AAH76615." evidence="12" ref="3">
    <original>V</original>
    <variation>L</variation>
    <location>
        <position position="32"/>
    </location>
</feature>
<sequence length="1960" mass="218134">MSRPRFNPRGTFPLQRPRAPNPPGMRPPGPFVRPGSMGLPRFYPAGRARGIPHRFPGHGSYQNMGPQRMNVQVTQHRTDPRLTKEKLDFPEAQQKKGKPHGSRWDDESHITPPVEVKQSSVTQVTEQSPKVQSRYTKESASSILASFGLSNEDLEELSRYPDEQLTPENMPLILRDIRMRKMSRRLPNLPSHSRNKETLSNETVSSNVIDYGHASKYGYTEDPLEVRIYDPEIPTDEVKNEFQPQQSISATVSTPNVICNSVFPGGDMFRQMDFPGESSSQSFFPVESGTKMSGLHISGQSVLEPVKSISQSISQTVSQTTSQSLNPPSMNQVPFTFELDAVLRQQERISQKSVISSADAHGGPTESKKDYQSEADLPIRSPFGIVKASWLPKFTQAGAQKMKRLPTPSMMNDYYAASPRIFPHLCSLCNVECSHLKDWIQHQNTSTHIESCRQLRQQYPDWNPEILPSRRNESNRKENETPRRRSHSPSPRHSRRSSSGHRIRRSRSPVRYIYRPRSRSPRICHRFISKYRSRSRSRSRSRSPYRSRNLLRRSPKSYRSASPERTSRKSVRSDRKKALEDGGQRSVHGTEVTKQKHTETVDKGLSPAQKPKLASGTKPSAKSLSSVKSDSHLGAYSAHKSENLEDDTLPEGKQESGKSALAQRKPQKDQSLSSNSILLVSELPEDGFTEEDIRKAFLPFGKISDVLLVPCRNEAYLEMELRKAVTSIMKYIETMPLVIKGKSVKVCVPGKKKPQNKEMKKKPSDIKKSSASALKKETDASKTMETVSSSSSAKSGQIKSSTVKVNKCAGKSAGSVKSVVTVAAKGKASIKTAKSGKKSLEAKKSGNIKNKDSNKPVTVPANSEIKASSEDKATGKSAEESPSGTLEATEKEPVNKESEEMSVVFISNLPNKGYSTEEIYNLAKPFGALKDILVLSSHKKAYIEINKKSADSMVKFYTCFPISMDGNQLSISMAPEHVDLKDEEALFTTLIQENDPEANIDKIYNRFVHLDNLPEDGLQCVLCVGHQFGKVDRYMFMSNKNKVILQLESPESALSMYNFLKQNPQNIGEHVLTCTLSPKTDSEVQRKNDLELGKGSTFSPDLKNSPVDESEVQTAADSSSVKPSEVEEETTSNIGTETSVHQEELGKEEPKQALCESDFAIQTLELEAQGAEVSIEIPLVASTPANIELFSENIDESALNQQMYTSDFEKEEAEVTNPETELAVSDSVFIEERNIKGIIEDSPSETEDIFSGIVQPMVDAIAEVDKHETVSEVLPSACNVTQAPGSYIEDEKVVSKKDIAEKVILDEKEEDEFNVKETRMDLQVKTEKAEKNEAIIFKEKLEKIIAAIREKPIESSVIKADPTKGLDQTSKPDETGKSSVLTVSNVYSSKSSIKATVVSSPKAKSTPSKTESHSTFPKPVLREQIKADKKVSAKEFGLLKNTRSGLAESNSKSKPTQIGVNRGCSGRISALQCKDSKVDYKDITKQSQETETKPPIMKRDDSNNKALALQNTKNSKSTTDRSSKSKEEPLFTFNLDEFVTVDEVIEEVNPSQAKQNPLKGKRKEALKISPSPELNLKKKKGKTSVPHSVEGELSFVTLDEIGEEEDATVQALVTVDEVIDEEELNMEEMVKNSNSLLTLDELIDQDDCIPHSGPKDVTVLSMAEEQDLQQERLVTVDEIGEVEESADITFATLNAKRDKRDSIGFISSQMPEDPSTLVTVDEIQDDSSDFHLMTLDEVTEEDENSLADFNNLKEELNFVTVDEVGDEEDGDNDSKVELARGKIEHHTDKKGNRKRRAVDPKKSKLDSFSQVGPGSETVTQKDLKTMPERHLAAKTPMKRVRLGKSSPSQKVAEPTKGEEAFQMSEGVDDAELKDSEPDEKRRKTQDSSVGKSMTSDVPGDLDFLVPKAGFFCPICSLFYSGEKAMANHCKSTRHKQNTEKFMAKQRKEKEQNETEERSSR</sequence>
<dbReference type="EMBL" id="D83033">
    <property type="protein sequence ID" value="BAA11749.1"/>
    <property type="molecule type" value="mRNA"/>
</dbReference>
<dbReference type="EMBL" id="AK043029">
    <property type="protein sequence ID" value="BAC31439.1"/>
    <property type="molecule type" value="mRNA"/>
</dbReference>
<dbReference type="EMBL" id="BC076615">
    <property type="protein sequence ID" value="AAH76615.1"/>
    <property type="molecule type" value="mRNA"/>
</dbReference>
<dbReference type="CCDS" id="CCDS20288.1">
    <molecule id="Q61464-4"/>
</dbReference>
<dbReference type="CCDS" id="CCDS51823.1">
    <molecule id="Q61464-2"/>
</dbReference>
<dbReference type="PIR" id="JC4842">
    <property type="entry name" value="JC4842"/>
</dbReference>
<dbReference type="RefSeq" id="NP_001159843.1">
    <molecule id="Q61464-2"/>
    <property type="nucleotide sequence ID" value="NM_001166371.1"/>
</dbReference>
<dbReference type="RefSeq" id="NP_032743.2">
    <property type="nucleotide sequence ID" value="NM_008717.3"/>
</dbReference>
<dbReference type="SMR" id="Q61464"/>
<dbReference type="BioGRID" id="201815">
    <property type="interactions" value="13"/>
</dbReference>
<dbReference type="FunCoup" id="Q61464">
    <property type="interactions" value="5112"/>
</dbReference>
<dbReference type="IntAct" id="Q61464">
    <property type="interactions" value="1"/>
</dbReference>
<dbReference type="MINT" id="Q61464"/>
<dbReference type="STRING" id="10090.ENSMUSP00000144989"/>
<dbReference type="GlyGen" id="Q61464">
    <property type="glycosylation" value="3 sites, 2 N-linked glycans (2 sites), 1 O-linked glycan (1 site)"/>
</dbReference>
<dbReference type="iPTMnet" id="Q61464"/>
<dbReference type="PhosphoSitePlus" id="Q61464"/>
<dbReference type="SwissPalm" id="Q61464"/>
<dbReference type="jPOST" id="Q61464"/>
<dbReference type="PaxDb" id="10090-ENSMUSP00000032088"/>
<dbReference type="PeptideAtlas" id="Q61464"/>
<dbReference type="ProteomicsDB" id="275022">
    <molecule id="Q61464-1"/>
</dbReference>
<dbReference type="ProteomicsDB" id="275023">
    <molecule id="Q61464-2"/>
</dbReference>
<dbReference type="ProteomicsDB" id="275024">
    <molecule id="Q61464-3"/>
</dbReference>
<dbReference type="ProteomicsDB" id="275025">
    <molecule id="Q61464-4"/>
</dbReference>
<dbReference type="ProteomicsDB" id="275026">
    <molecule id="Q61464-5"/>
</dbReference>
<dbReference type="ProteomicsDB" id="275027">
    <molecule id="Q61464-7"/>
</dbReference>
<dbReference type="Pumba" id="Q61464"/>
<dbReference type="Antibodypedia" id="31207">
    <property type="antibodies" value="98 antibodies from 22 providers"/>
</dbReference>
<dbReference type="DNASU" id="18139"/>
<dbReference type="Ensembl" id="ENSMUST00000113835.10">
    <molecule id="Q61464-2"/>
    <property type="protein sequence ID" value="ENSMUSP00000109466.4"/>
    <property type="gene ID" value="ENSMUSG00000030016.16"/>
</dbReference>
<dbReference type="GeneID" id="18139"/>
<dbReference type="KEGG" id="mmu:18139"/>
<dbReference type="UCSC" id="uc009coo.2">
    <molecule id="Q61464-3"/>
    <property type="organism name" value="mouse"/>
</dbReference>
<dbReference type="UCSC" id="uc009coq.2">
    <molecule id="Q61464-2"/>
    <property type="organism name" value="mouse"/>
</dbReference>
<dbReference type="AGR" id="MGI:1203484"/>
<dbReference type="CTD" id="18139"/>
<dbReference type="MGI" id="MGI:1203484">
    <property type="gene designation" value="Zfp638"/>
</dbReference>
<dbReference type="VEuPathDB" id="HostDB:ENSMUSG00000030016"/>
<dbReference type="eggNOG" id="ENOG502QVQ7">
    <property type="taxonomic scope" value="Eukaryota"/>
</dbReference>
<dbReference type="GeneTree" id="ENSGT00940000153322"/>
<dbReference type="InParanoid" id="Q61464"/>
<dbReference type="OrthoDB" id="10072641at2759"/>
<dbReference type="PhylomeDB" id="Q61464"/>
<dbReference type="BioGRID-ORCS" id="18139">
    <property type="hits" value="10 hits in 78 CRISPR screens"/>
</dbReference>
<dbReference type="ChiTaRS" id="Zfp638">
    <property type="organism name" value="mouse"/>
</dbReference>
<dbReference type="PRO" id="PR:Q61464"/>
<dbReference type="Proteomes" id="UP000000589">
    <property type="component" value="Chromosome 6"/>
</dbReference>
<dbReference type="RNAct" id="Q61464">
    <property type="molecule type" value="protein"/>
</dbReference>
<dbReference type="Bgee" id="ENSMUSG00000030016">
    <property type="expression patterns" value="Expressed in undifferentiated genital tubercle and 274 other cell types or tissues"/>
</dbReference>
<dbReference type="ExpressionAtlas" id="Q61464">
    <property type="expression patterns" value="baseline and differential"/>
</dbReference>
<dbReference type="GO" id="GO:0016607">
    <property type="term" value="C:nuclear speck"/>
    <property type="evidence" value="ECO:0007669"/>
    <property type="project" value="UniProtKB-SubCell"/>
</dbReference>
<dbReference type="GO" id="GO:0003677">
    <property type="term" value="F:DNA binding"/>
    <property type="evidence" value="ECO:0007669"/>
    <property type="project" value="UniProtKB-KW"/>
</dbReference>
<dbReference type="GO" id="GO:0003723">
    <property type="term" value="F:RNA binding"/>
    <property type="evidence" value="ECO:0007669"/>
    <property type="project" value="InterPro"/>
</dbReference>
<dbReference type="GO" id="GO:0008270">
    <property type="term" value="F:zinc ion binding"/>
    <property type="evidence" value="ECO:0007669"/>
    <property type="project" value="UniProtKB-KW"/>
</dbReference>
<dbReference type="GO" id="GO:0008380">
    <property type="term" value="P:RNA splicing"/>
    <property type="evidence" value="ECO:0007669"/>
    <property type="project" value="InterPro"/>
</dbReference>
<dbReference type="CDD" id="cd12716">
    <property type="entry name" value="RRM1_2_NP220"/>
    <property type="match status" value="1"/>
</dbReference>
<dbReference type="Gene3D" id="3.30.70.330">
    <property type="match status" value="3"/>
</dbReference>
<dbReference type="Gene3D" id="3.30.160.60">
    <property type="entry name" value="Classic Zinc Finger"/>
    <property type="match status" value="1"/>
</dbReference>
<dbReference type="InterPro" id="IPR000690">
    <property type="entry name" value="Matrin/U1-C_Znf_C2H2"/>
</dbReference>
<dbReference type="InterPro" id="IPR003604">
    <property type="entry name" value="Matrin/U1-like-C_Znf_C2H2"/>
</dbReference>
<dbReference type="InterPro" id="IPR012677">
    <property type="entry name" value="Nucleotide-bd_a/b_plait_sf"/>
</dbReference>
<dbReference type="InterPro" id="IPR035979">
    <property type="entry name" value="RBD_domain_sf"/>
</dbReference>
<dbReference type="InterPro" id="IPR000504">
    <property type="entry name" value="RRM_dom"/>
</dbReference>
<dbReference type="InterPro" id="IPR033096">
    <property type="entry name" value="ZNF638_RRM1/2"/>
</dbReference>
<dbReference type="InterPro" id="IPR022755">
    <property type="entry name" value="Znf_C2H2_jaz"/>
</dbReference>
<dbReference type="InterPro" id="IPR036236">
    <property type="entry name" value="Znf_C2H2_sf"/>
</dbReference>
<dbReference type="InterPro" id="IPR013087">
    <property type="entry name" value="Znf_C2H2_type"/>
</dbReference>
<dbReference type="PANTHER" id="PTHR15592">
    <property type="entry name" value="MATRIN 3/NUCLEAR PROTEIN 220-RELATED"/>
    <property type="match status" value="1"/>
</dbReference>
<dbReference type="Pfam" id="PF12171">
    <property type="entry name" value="zf-C2H2_jaz"/>
    <property type="match status" value="1"/>
</dbReference>
<dbReference type="SMART" id="SM00360">
    <property type="entry name" value="RRM"/>
    <property type="match status" value="2"/>
</dbReference>
<dbReference type="SMART" id="SM00355">
    <property type="entry name" value="ZnF_C2H2"/>
    <property type="match status" value="2"/>
</dbReference>
<dbReference type="SMART" id="SM00451">
    <property type="entry name" value="ZnF_U1"/>
    <property type="match status" value="2"/>
</dbReference>
<dbReference type="SUPFAM" id="SSF57667">
    <property type="entry name" value="beta-beta-alpha zinc fingers"/>
    <property type="match status" value="1"/>
</dbReference>
<dbReference type="SUPFAM" id="SSF54928">
    <property type="entry name" value="RNA-binding domain, RBD"/>
    <property type="match status" value="3"/>
</dbReference>
<dbReference type="PROSITE" id="PS50102">
    <property type="entry name" value="RRM"/>
    <property type="match status" value="1"/>
</dbReference>
<dbReference type="PROSITE" id="PS50171">
    <property type="entry name" value="ZF_MATRIN"/>
    <property type="match status" value="1"/>
</dbReference>
<evidence type="ECO:0000250" key="1">
    <source>
        <dbReference type="UniProtKB" id="Q14966"/>
    </source>
</evidence>
<evidence type="ECO:0000255" key="2">
    <source>
        <dbReference type="PROSITE-ProRule" id="PRU00130"/>
    </source>
</evidence>
<evidence type="ECO:0000255" key="3">
    <source>
        <dbReference type="PROSITE-ProRule" id="PRU00176"/>
    </source>
</evidence>
<evidence type="ECO:0000256" key="4">
    <source>
        <dbReference type="SAM" id="MobiDB-lite"/>
    </source>
</evidence>
<evidence type="ECO:0000269" key="5">
    <source>
    </source>
</evidence>
<evidence type="ECO:0000269" key="6">
    <source>
    </source>
</evidence>
<evidence type="ECO:0000269" key="7">
    <source>
    </source>
</evidence>
<evidence type="ECO:0000303" key="8">
    <source>
    </source>
</evidence>
<evidence type="ECO:0000303" key="9">
    <source>
    </source>
</evidence>
<evidence type="ECO:0000303" key="10">
    <source>
    </source>
</evidence>
<evidence type="ECO:0000303" key="11">
    <source>
    </source>
</evidence>
<evidence type="ECO:0000305" key="12"/>
<evidence type="ECO:0000312" key="13">
    <source>
        <dbReference type="MGI" id="MGI:1203484"/>
    </source>
</evidence>
<evidence type="ECO:0007744" key="14">
    <source>
    </source>
</evidence>
<gene>
    <name evidence="10 13" type="primary">Znf638</name>
    <name evidence="11" type="synonym">Np220</name>
    <name evidence="13" type="synonym">Zfml</name>
    <name evidence="13" type="synonym">Zfp638</name>
</gene>
<proteinExistence type="evidence at protein level"/>